<protein>
    <recommendedName>
        <fullName>Lysosome-associated membrane glycoprotein 2</fullName>
        <shortName>LAMP-2</shortName>
        <shortName>Lysosome-associated membrane protein 2</shortName>
    </recommendedName>
    <alternativeName>
        <fullName>CD107 antigen-like family member B</fullName>
    </alternativeName>
    <alternativeName>
        <fullName>Lysosomal membrane glycoprotein B</fullName>
        <shortName>LGP-B</shortName>
    </alternativeName>
    <cdAntigenName>CD107b</cdAntigenName>
</protein>
<dbReference type="EMBL" id="L19357">
    <property type="protein sequence ID" value="AAC37683.1"/>
    <property type="molecule type" value="mRNA"/>
</dbReference>
<dbReference type="RefSeq" id="NP_001233678.1">
    <property type="nucleotide sequence ID" value="NM_001246749.1"/>
</dbReference>
<dbReference type="SMR" id="P49130"/>
<dbReference type="GlyCosmos" id="P49130">
    <property type="glycosylation" value="17 sites, No reported glycans"/>
</dbReference>
<dbReference type="PaxDb" id="10029-NP_001233678.1"/>
<dbReference type="GeneID" id="100689316"/>
<dbReference type="KEGG" id="cge:100689316"/>
<dbReference type="CTD" id="3920"/>
<dbReference type="eggNOG" id="KOG4818">
    <property type="taxonomic scope" value="Eukaryota"/>
</dbReference>
<dbReference type="OrthoDB" id="6232933at2759"/>
<dbReference type="Proteomes" id="UP000694386">
    <property type="component" value="Unplaced"/>
</dbReference>
<dbReference type="Proteomes" id="UP001108280">
    <property type="component" value="Chromosome X"/>
</dbReference>
<dbReference type="GO" id="GO:0000421">
    <property type="term" value="C:autophagosome membrane"/>
    <property type="evidence" value="ECO:0007669"/>
    <property type="project" value="UniProtKB-SubCell"/>
</dbReference>
<dbReference type="GO" id="GO:0031902">
    <property type="term" value="C:late endosome membrane"/>
    <property type="evidence" value="ECO:0007669"/>
    <property type="project" value="TreeGrafter"/>
</dbReference>
<dbReference type="GO" id="GO:0005765">
    <property type="term" value="C:lysosomal membrane"/>
    <property type="evidence" value="ECO:0007669"/>
    <property type="project" value="UniProtKB-SubCell"/>
</dbReference>
<dbReference type="GO" id="GO:0005764">
    <property type="term" value="C:lysosome"/>
    <property type="evidence" value="ECO:0000250"/>
    <property type="project" value="UniProtKB"/>
</dbReference>
<dbReference type="GO" id="GO:0005886">
    <property type="term" value="C:plasma membrane"/>
    <property type="evidence" value="ECO:0007669"/>
    <property type="project" value="UniProtKB-SubCell"/>
</dbReference>
<dbReference type="GO" id="GO:0008200">
    <property type="term" value="F:ion channel inhibitor activity"/>
    <property type="evidence" value="ECO:0000250"/>
    <property type="project" value="UniProtKB"/>
</dbReference>
<dbReference type="GO" id="GO:0097352">
    <property type="term" value="P:autophagosome maturation"/>
    <property type="evidence" value="ECO:0000250"/>
    <property type="project" value="UniProtKB"/>
</dbReference>
<dbReference type="GO" id="GO:0009267">
    <property type="term" value="P:cellular response to starvation"/>
    <property type="evidence" value="ECO:0000250"/>
    <property type="project" value="UniProtKB"/>
</dbReference>
<dbReference type="GO" id="GO:0061684">
    <property type="term" value="P:chaperone-mediated autophagy"/>
    <property type="evidence" value="ECO:0000250"/>
    <property type="project" value="UniProtKB"/>
</dbReference>
<dbReference type="GO" id="GO:0007042">
    <property type="term" value="P:lysosomal lumen acidification"/>
    <property type="evidence" value="ECO:0000250"/>
    <property type="project" value="UniProtKB"/>
</dbReference>
<dbReference type="GO" id="GO:1905146">
    <property type="term" value="P:lysosomal protein catabolic process"/>
    <property type="evidence" value="ECO:0000250"/>
    <property type="project" value="UniProtKB"/>
</dbReference>
<dbReference type="GO" id="GO:0050821">
    <property type="term" value="P:protein stabilization"/>
    <property type="evidence" value="ECO:0000250"/>
    <property type="project" value="CAFA"/>
</dbReference>
<dbReference type="GO" id="GO:0006605">
    <property type="term" value="P:protein targeting"/>
    <property type="evidence" value="ECO:0000250"/>
    <property type="project" value="UniProtKB"/>
</dbReference>
<dbReference type="GO" id="GO:0061740">
    <property type="term" value="P:protein targeting to lysosome involved in chaperone-mediated autophagy"/>
    <property type="evidence" value="ECO:0000250"/>
    <property type="project" value="UniProtKB"/>
</dbReference>
<dbReference type="FunFam" id="2.40.160.110:FF:000004">
    <property type="entry name" value="Lysosomal associated membrane protein 2"/>
    <property type="match status" value="1"/>
</dbReference>
<dbReference type="FunFam" id="2.40.160.110:FF:000001">
    <property type="entry name" value="lysosome-associated membrane glycoprotein 2 isoform X2"/>
    <property type="match status" value="1"/>
</dbReference>
<dbReference type="Gene3D" id="2.40.160.110">
    <property type="match status" value="2"/>
</dbReference>
<dbReference type="InterPro" id="IPR048528">
    <property type="entry name" value="Lamp2-like_luminal"/>
</dbReference>
<dbReference type="InterPro" id="IPR048524">
    <property type="entry name" value="Lamp2-like_TM"/>
</dbReference>
<dbReference type="InterPro" id="IPR018134">
    <property type="entry name" value="LAMP_CS"/>
</dbReference>
<dbReference type="InterPro" id="IPR002000">
    <property type="entry name" value="Lysosome-assoc_membr_glycop"/>
</dbReference>
<dbReference type="PANTHER" id="PTHR11506">
    <property type="entry name" value="LYSOSOME-ASSOCIATED MEMBRANE GLYCOPROTEIN"/>
    <property type="match status" value="1"/>
</dbReference>
<dbReference type="PANTHER" id="PTHR11506:SF35">
    <property type="entry name" value="LYSOSOME-ASSOCIATED MEMBRANE GLYCOPROTEIN 5"/>
    <property type="match status" value="1"/>
</dbReference>
<dbReference type="Pfam" id="PF01299">
    <property type="entry name" value="Lamp2-like_luminal"/>
    <property type="match status" value="2"/>
</dbReference>
<dbReference type="Pfam" id="PF21222">
    <property type="entry name" value="Lamp2_2nd"/>
    <property type="match status" value="1"/>
</dbReference>
<dbReference type="PRINTS" id="PR00336">
    <property type="entry name" value="LYSASSOCTDMP"/>
</dbReference>
<dbReference type="PROSITE" id="PS00310">
    <property type="entry name" value="LAMP_1"/>
    <property type="match status" value="1"/>
</dbReference>
<dbReference type="PROSITE" id="PS00311">
    <property type="entry name" value="LAMP_2"/>
    <property type="match status" value="1"/>
</dbReference>
<dbReference type="PROSITE" id="PS51407">
    <property type="entry name" value="LAMP_3"/>
    <property type="match status" value="1"/>
</dbReference>
<comment type="function">
    <text evidence="1 2">Lysosomal membrane glycoprotein which plays an important role in lysosome biogenesis, lysosomal pH regulation and autophagy. Acts as an important regulator of lysosomal lumen pH regulation by acting as a direct inhibitor of the proton channel TMEM175, facilitating lysosomal acidification for optimal hydrolase activity. Plays an important role in chaperone-mediated autophagy, a process that mediates lysosomal degradation of proteins in response to various stresses and as part of the normal turnover of proteins with a long biological half-live. Functions by binding target proteins, such as GAPDH, NLRP3 and MLLT11, and targeting them for lysosomal degradation. In the chaperone-mediated autophagy, acts downstream of chaperones, such as HSPA8/HSC70, which recognize and bind substrate proteins and mediate their recruitment to lysosomes, where target proteins bind LAMP2. Plays a role in lysosomal protein degradation in response to starvation. Required for the fusion of autophagosomes with lysosomes during autophagy. Cells that lack LAMP2 express normal levels of VAMP8, but fail to accumulate STX17 on autophagosomes, which is the most likely explanation for the lack of fusion between autophagosomes and lysosomes. Required for normal degradation of the contents of autophagosomes. Required for efficient MHC class II-mediated presentation of exogenous antigens via its function in lysosomal protein degradation; antigenic peptides generated by proteases in the endosomal/lysosomal compartment are captured by nascent MHC II subunits. Is not required for efficient MHC class II-mediated presentation of endogenous antigens (By similarity).</text>
</comment>
<comment type="subunit">
    <text evidence="1 2 3">Monomer. Forms large homooligomers (By similarity). Interacts (via its cytoplasmic region) with HSPA8; HSPA8 mediates recruitment of proteins with a KFERQ motif to the surface of the lysosome for chaperone-mediated autophagy (By similarity). Interacts with HSP90 in the lysosome lumen; this enhances LAMP2 stability (By similarity). Interacts with MLLT11 (By similarity). Interacts with ABCB9 (By similarity). Interacts with FURIN (By similarity). Interacts with CT55; this interaction may be important for LAMP2 protein stability (By similarity). Interacts with TMEM175; inhibiting the proton channel activity of TMEM175 (By similarity). Forms a ternary complex with RAB7A and RUFY4 (via RUN domain); the interaction with RAB7A is mediated by RUFY4 (via RUN and coiled coil domains) (By similarity).</text>
</comment>
<comment type="subcellular location">
    <subcellularLocation>
        <location evidence="5 6">Lysosome membrane</location>
        <topology evidence="5">Single-pass type I membrane protein</topology>
    </subcellularLocation>
    <subcellularLocation>
        <location evidence="1">Endosome membrane</location>
        <topology evidence="5">Single-pass type I membrane protein</topology>
    </subcellularLocation>
    <subcellularLocation>
        <location evidence="6">Cell membrane</location>
        <topology evidence="5">Single-pass type I membrane protein</topology>
    </subcellularLocation>
    <subcellularLocation>
        <location evidence="3">Cytoplasmic vesicle</location>
        <location evidence="3">Autophagosome membrane</location>
    </subcellularLocation>
    <text evidence="1">This protein shuttles between lysosomes, endosomes, and the plasma membrane.</text>
</comment>
<comment type="PTM">
    <text evidence="2">Extensively N-glycosylated. Contains a minor proportion of O-linked glycans.</text>
</comment>
<comment type="similarity">
    <text evidence="5">Belongs to the LAMP family.</text>
</comment>
<organism>
    <name type="scientific">Cricetulus griseus</name>
    <name type="common">Chinese hamster</name>
    <name type="synonym">Cricetulus barabensis griseus</name>
    <dbReference type="NCBI Taxonomy" id="10029"/>
    <lineage>
        <taxon>Eukaryota</taxon>
        <taxon>Metazoa</taxon>
        <taxon>Chordata</taxon>
        <taxon>Craniata</taxon>
        <taxon>Vertebrata</taxon>
        <taxon>Euteleostomi</taxon>
        <taxon>Mammalia</taxon>
        <taxon>Eutheria</taxon>
        <taxon>Euarchontoglires</taxon>
        <taxon>Glires</taxon>
        <taxon>Rodentia</taxon>
        <taxon>Myomorpha</taxon>
        <taxon>Muroidea</taxon>
        <taxon>Cricetidae</taxon>
        <taxon>Cricetinae</taxon>
        <taxon>Cricetulus</taxon>
    </lineage>
</organism>
<keyword id="KW-0072">Autophagy</keyword>
<keyword id="KW-1003">Cell membrane</keyword>
<keyword id="KW-0968">Cytoplasmic vesicle</keyword>
<keyword id="KW-1015">Disulfide bond</keyword>
<keyword id="KW-0967">Endosome</keyword>
<keyword id="KW-0325">Glycoprotein</keyword>
<keyword id="KW-0458">Lysosome</keyword>
<keyword id="KW-0472">Membrane</keyword>
<keyword id="KW-0732">Signal</keyword>
<keyword id="KW-0812">Transmembrane</keyword>
<keyword id="KW-1133">Transmembrane helix</keyword>
<gene>
    <name type="primary">LAMP2</name>
    <name type="synonym">LGPB</name>
</gene>
<reference key="1">
    <citation type="journal article" date="1995" name="Cell. Mol. Biol. Res.">
        <title>Cell surface accumulation of overexpressed hamster lysosomal membrane glycoproteins.</title>
        <authorList>
            <person name="Uthayakumar S."/>
            <person name="Granger B.L."/>
        </authorList>
    </citation>
    <scope>NUCLEOTIDE SEQUENCE [MRNA]</scope>
    <scope>SUBCELLULAR LOCATION</scope>
</reference>
<name>LAMP2_CRIGR</name>
<sequence>MMCFRLSPVSGSGLVLSCLLLGAVQSYAFELNLPDSKATCLFAKWKMNFTISYETTTNKTLKTVTISEPHNVTYNGSSCGDDQGVAKIAVQFGSTVSWNVTFTKEESHYVIGSIWLVYNTSDNTTFPGAIPKGSATVISSQSIEIPLDDIFRCNSLLTFKTGNVVQNYWDIHLQAFVQNGTVSKEEFVCEEDKSVTTVRPIIHTTVPPPTTTPTPLPPKVGNYSVSNGNATCLLATMGLQLNVTEEKVPFIFNINPSTTNFTGSCHPQTAQLRLNNSQIKYLDFIFAVKSESHFYLKEVNVSMYMANGSVFSVANNNLSFWDAPLGSSYMCNKEQVVSVSRTFQINTFNLKVQPFNVTKGKYATAQDCSADEDNFLVPIAVGAALAGVLALVLLAYFIGLKRHHTGYEQF</sequence>
<proteinExistence type="evidence at transcript level"/>
<evidence type="ECO:0000250" key="1">
    <source>
        <dbReference type="UniProtKB" id="P13473"/>
    </source>
</evidence>
<evidence type="ECO:0000250" key="2">
    <source>
        <dbReference type="UniProtKB" id="P17046"/>
    </source>
</evidence>
<evidence type="ECO:0000250" key="3">
    <source>
        <dbReference type="UniProtKB" id="P17047"/>
    </source>
</evidence>
<evidence type="ECO:0000255" key="4"/>
<evidence type="ECO:0000255" key="5">
    <source>
        <dbReference type="PROSITE-ProRule" id="PRU00740"/>
    </source>
</evidence>
<evidence type="ECO:0000269" key="6">
    <source>
    </source>
</evidence>
<accession>P49130</accession>
<feature type="signal peptide" evidence="4">
    <location>
        <begin position="1"/>
        <end position="28"/>
    </location>
</feature>
<feature type="chain" id="PRO_0000017113" description="Lysosome-associated membrane glycoprotein 2">
    <location>
        <begin position="29"/>
        <end position="410"/>
    </location>
</feature>
<feature type="topological domain" description="Lumenal" evidence="4">
    <location>
        <begin position="29"/>
        <end position="375"/>
    </location>
</feature>
<feature type="transmembrane region" description="Helical" evidence="5">
    <location>
        <begin position="376"/>
        <end position="399"/>
    </location>
</feature>
<feature type="topological domain" description="Cytoplasmic" evidence="5">
    <location>
        <begin position="400"/>
        <end position="410"/>
    </location>
</feature>
<feature type="region of interest" description="First lumenal domain">
    <location>
        <begin position="29"/>
        <end position="192"/>
    </location>
</feature>
<feature type="region of interest" description="Hinge">
    <location>
        <begin position="193"/>
        <end position="228"/>
    </location>
</feature>
<feature type="region of interest" description="Second lumenal domain">
    <location>
        <begin position="229"/>
        <end position="375"/>
    </location>
</feature>
<feature type="region of interest" description="Important for binding and subsequent lysosomal degradation of target proteins" evidence="1">
    <location>
        <begin position="401"/>
        <end position="404"/>
    </location>
</feature>
<feature type="glycosylation site" description="N-linked (GlcNAc...) asparagine" evidence="4">
    <location>
        <position position="48"/>
    </location>
</feature>
<feature type="glycosylation site" description="N-linked (GlcNAc...) asparagine" evidence="4">
    <location>
        <position position="58"/>
    </location>
</feature>
<feature type="glycosylation site" description="N-linked (GlcNAc...) asparagine" evidence="4">
    <location>
        <position position="71"/>
    </location>
</feature>
<feature type="glycosylation site" description="N-linked (GlcNAc...) asparagine" evidence="4">
    <location>
        <position position="75"/>
    </location>
</feature>
<feature type="glycosylation site" description="N-linked (GlcNAc...) asparagine" evidence="4">
    <location>
        <position position="99"/>
    </location>
</feature>
<feature type="glycosylation site" description="N-linked (GlcNAc...) asparagine" evidence="4">
    <location>
        <position position="119"/>
    </location>
</feature>
<feature type="glycosylation site" description="N-linked (GlcNAc...) asparagine" evidence="4">
    <location>
        <position position="123"/>
    </location>
</feature>
<feature type="glycosylation site" description="N-linked (GlcNAc...) asparagine" evidence="4">
    <location>
        <position position="179"/>
    </location>
</feature>
<feature type="glycosylation site" description="N-linked (GlcNAc...) asparagine" evidence="4">
    <location>
        <position position="222"/>
    </location>
</feature>
<feature type="glycosylation site" description="N-linked (GlcNAc...) asparagine" evidence="4">
    <location>
        <position position="229"/>
    </location>
</feature>
<feature type="glycosylation site" description="N-linked (GlcNAc...) asparagine" evidence="4">
    <location>
        <position position="242"/>
    </location>
</feature>
<feature type="glycosylation site" description="N-linked (GlcNAc...) asparagine" evidence="4">
    <location>
        <position position="260"/>
    </location>
</feature>
<feature type="glycosylation site" description="N-linked (GlcNAc...) asparagine" evidence="4">
    <location>
        <position position="275"/>
    </location>
</feature>
<feature type="glycosylation site" description="N-linked (GlcNAc...) asparagine" evidence="4">
    <location>
        <position position="300"/>
    </location>
</feature>
<feature type="glycosylation site" description="N-linked (GlcNAc...) asparagine" evidence="4">
    <location>
        <position position="307"/>
    </location>
</feature>
<feature type="glycosylation site" description="N-linked (GlcNAc...) asparagine" evidence="4">
    <location>
        <position position="317"/>
    </location>
</feature>
<feature type="glycosylation site" description="N-linked (GlcNAc...) asparagine" evidence="4">
    <location>
        <position position="356"/>
    </location>
</feature>
<feature type="disulfide bond" evidence="5">
    <location>
        <begin position="40"/>
        <end position="79"/>
    </location>
</feature>
<feature type="disulfide bond" evidence="5">
    <location>
        <begin position="153"/>
        <end position="189"/>
    </location>
</feature>
<feature type="disulfide bond" evidence="5">
    <location>
        <begin position="232"/>
        <end position="265"/>
    </location>
</feature>
<feature type="disulfide bond" evidence="5">
    <location>
        <begin position="331"/>
        <end position="368"/>
    </location>
</feature>